<accession>Q8ZYV1</accession>
<evidence type="ECO:0000250" key="1"/>
<evidence type="ECO:0000255" key="2">
    <source>
        <dbReference type="HAMAP-Rule" id="MF_01163"/>
    </source>
</evidence>
<comment type="function">
    <text evidence="2">Catalyzes the ATP- and formate-dependent formylation of 5-aminoimidazole-4-carboxamide-1-beta-d-ribofuranosyl 5'-monophosphate (AICAR) to 5-formaminoimidazole-4-carboxamide-1-beta-d-ribofuranosyl 5'-monophosphate (FAICAR) in the absence of folates.</text>
</comment>
<comment type="catalytic activity">
    <reaction evidence="2">
        <text>5-amino-1-(5-phospho-beta-D-ribosyl)imidazole-4-carboxamide + formate + ATP = 5-formamido-1-(5-phospho-D-ribosyl)imidazole-4-carboxamide + ADP + phosphate</text>
        <dbReference type="Rhea" id="RHEA:24836"/>
        <dbReference type="ChEBI" id="CHEBI:15740"/>
        <dbReference type="ChEBI" id="CHEBI:30616"/>
        <dbReference type="ChEBI" id="CHEBI:43474"/>
        <dbReference type="ChEBI" id="CHEBI:58467"/>
        <dbReference type="ChEBI" id="CHEBI:58475"/>
        <dbReference type="ChEBI" id="CHEBI:456216"/>
        <dbReference type="EC" id="6.3.4.23"/>
    </reaction>
</comment>
<comment type="cofactor">
    <cofactor evidence="1">
        <name>Mg(2+)</name>
        <dbReference type="ChEBI" id="CHEBI:18420"/>
    </cofactor>
    <cofactor evidence="1">
        <name>Mn(2+)</name>
        <dbReference type="ChEBI" id="CHEBI:29035"/>
    </cofactor>
    <text evidence="1">Binds 1 Mg(2+) or Mn(2+) ion per subunit.</text>
</comment>
<comment type="pathway">
    <text evidence="2">Purine metabolism; IMP biosynthesis via de novo pathway; 5-formamido-1-(5-phospho-D-ribosyl)imidazole-4-carboxamide from 5-amino-1-(5-phospho-D-ribosyl)imidazole-4-carboxamide (formate route): step 1/1.</text>
</comment>
<comment type="similarity">
    <text evidence="2">Belongs to the phosphohexose mutase family.</text>
</comment>
<protein>
    <recommendedName>
        <fullName evidence="2">5-formaminoimidazole-4-carboxamide-1-(beta)-D-ribofuranosyl 5'-monophosphate synthetase</fullName>
        <ecNumber evidence="2">6.3.4.23</ecNumber>
    </recommendedName>
    <alternativeName>
        <fullName evidence="2">5-aminoimidazole-4-carboxamide-1-beta-D-ribofuranosyl 5'-monophosphate--formate ligase</fullName>
    </alternativeName>
</protein>
<gene>
    <name evidence="2" type="primary">purP</name>
    <name type="ordered locus">PAE0608</name>
</gene>
<feature type="chain" id="PRO_0000348631" description="5-formaminoimidazole-4-carboxamide-1-(beta)-D-ribofuranosyl 5'-monophosphate synthetase">
    <location>
        <begin position="1"/>
        <end position="341"/>
    </location>
</feature>
<feature type="domain" description="ATP-grasp" evidence="2">
    <location>
        <begin position="113"/>
        <end position="328"/>
    </location>
</feature>
<feature type="binding site" evidence="2">
    <location>
        <position position="27"/>
    </location>
    <ligand>
        <name>5-amino-1-(5-phospho-beta-D-ribosyl)imidazole-4-carboxamide</name>
        <dbReference type="ChEBI" id="CHEBI:58475"/>
    </ligand>
</feature>
<feature type="binding site" evidence="2">
    <location>
        <position position="92"/>
    </location>
    <ligand>
        <name>5-amino-1-(5-phospho-beta-D-ribosyl)imidazole-4-carboxamide</name>
        <dbReference type="ChEBI" id="CHEBI:58475"/>
    </ligand>
</feature>
<feature type="binding site" evidence="2">
    <location>
        <begin position="143"/>
        <end position="195"/>
    </location>
    <ligand>
        <name>ATP</name>
        <dbReference type="ChEBI" id="CHEBI:30616"/>
    </ligand>
</feature>
<feature type="binding site" evidence="2">
    <location>
        <position position="217"/>
    </location>
    <ligand>
        <name>ATP</name>
        <dbReference type="ChEBI" id="CHEBI:30616"/>
    </ligand>
</feature>
<feature type="binding site" evidence="2">
    <location>
        <position position="237"/>
    </location>
    <ligand>
        <name>5-amino-1-(5-phospho-beta-D-ribosyl)imidazole-4-carboxamide</name>
        <dbReference type="ChEBI" id="CHEBI:58475"/>
    </ligand>
</feature>
<feature type="binding site" evidence="2">
    <location>
        <position position="276"/>
    </location>
    <ligand>
        <name>Mg(2+)</name>
        <dbReference type="ChEBI" id="CHEBI:18420"/>
    </ligand>
</feature>
<feature type="binding site" evidence="2">
    <location>
        <position position="289"/>
    </location>
    <ligand>
        <name>Mg(2+)</name>
        <dbReference type="ChEBI" id="CHEBI:18420"/>
    </ligand>
</feature>
<sequence length="341" mass="38690">MALKPTMSQLLKNYDLERLAISTVASHTALQILRGAKKYGFRTIAVARGEAVAQFYRQFPFIDEVWVGDFANFRKTAEKLAANNAVFIPHGSYVEYVGWRQALEAPVPTLGCRELLRWEADQFKKMSLLEKAGIPIPRIYKTAEEVEGPVIVKLFGAKGGRGYFVARDRRELAERLKRVTEDYIIQEYLFGVPAYYHYFSSPVYSRLEIFGADIRYESNVDGRTFGWAEPTFVVVGNLPMVLRESLLPTIYTYGVQFLKAVEEAVGCKLAGPFCLESIIKDDMSIVVFEFSGRIVAGTNIYMGYGSPYSVLYFDKPMDMGERIAHEIKEAVKRGKIEHLFT</sequence>
<organism>
    <name type="scientific">Pyrobaculum aerophilum (strain ATCC 51768 / DSM 7523 / JCM 9630 / CIP 104966 / NBRC 100827 / IM2)</name>
    <dbReference type="NCBI Taxonomy" id="178306"/>
    <lineage>
        <taxon>Archaea</taxon>
        <taxon>Thermoproteota</taxon>
        <taxon>Thermoprotei</taxon>
        <taxon>Thermoproteales</taxon>
        <taxon>Thermoproteaceae</taxon>
        <taxon>Pyrobaculum</taxon>
    </lineage>
</organism>
<dbReference type="EC" id="6.3.4.23" evidence="2"/>
<dbReference type="EMBL" id="AE009441">
    <property type="protein sequence ID" value="AAL62892.1"/>
    <property type="molecule type" value="Genomic_DNA"/>
</dbReference>
<dbReference type="SMR" id="Q8ZYV1"/>
<dbReference type="STRING" id="178306.PAE0608"/>
<dbReference type="EnsemblBacteria" id="AAL62892">
    <property type="protein sequence ID" value="AAL62892"/>
    <property type="gene ID" value="PAE0608"/>
</dbReference>
<dbReference type="KEGG" id="pai:PAE0608"/>
<dbReference type="PATRIC" id="fig|178306.9.peg.436"/>
<dbReference type="eggNOG" id="arCOG04346">
    <property type="taxonomic scope" value="Archaea"/>
</dbReference>
<dbReference type="HOGENOM" id="CLU_065084_0_0_2"/>
<dbReference type="InParanoid" id="Q8ZYV1"/>
<dbReference type="UniPathway" id="UPA00074">
    <property type="reaction ID" value="UER00134"/>
</dbReference>
<dbReference type="Proteomes" id="UP000002439">
    <property type="component" value="Chromosome"/>
</dbReference>
<dbReference type="GO" id="GO:0005524">
    <property type="term" value="F:ATP binding"/>
    <property type="evidence" value="ECO:0007669"/>
    <property type="project" value="UniProtKB-KW"/>
</dbReference>
<dbReference type="GO" id="GO:0016879">
    <property type="term" value="F:ligase activity, forming carbon-nitrogen bonds"/>
    <property type="evidence" value="ECO:0007669"/>
    <property type="project" value="UniProtKB-UniRule"/>
</dbReference>
<dbReference type="GO" id="GO:0000287">
    <property type="term" value="F:magnesium ion binding"/>
    <property type="evidence" value="ECO:0007669"/>
    <property type="project" value="InterPro"/>
</dbReference>
<dbReference type="GO" id="GO:0006189">
    <property type="term" value="P:'de novo' IMP biosynthetic process"/>
    <property type="evidence" value="ECO:0007669"/>
    <property type="project" value="UniProtKB-UniRule"/>
</dbReference>
<dbReference type="Gene3D" id="3.40.50.20">
    <property type="match status" value="1"/>
</dbReference>
<dbReference type="Gene3D" id="3.30.1490.20">
    <property type="entry name" value="ATP-grasp fold, A domain"/>
    <property type="match status" value="1"/>
</dbReference>
<dbReference type="Gene3D" id="3.30.470.20">
    <property type="entry name" value="ATP-grasp fold, B domain"/>
    <property type="match status" value="1"/>
</dbReference>
<dbReference type="HAMAP" id="MF_01163">
    <property type="entry name" value="IMP_biosynth_PurP"/>
    <property type="match status" value="1"/>
</dbReference>
<dbReference type="InterPro" id="IPR011761">
    <property type="entry name" value="ATP-grasp"/>
</dbReference>
<dbReference type="InterPro" id="IPR013815">
    <property type="entry name" value="ATP_grasp_subdomain_1"/>
</dbReference>
<dbReference type="InterPro" id="IPR023656">
    <property type="entry name" value="IMP_biosynth_PurP"/>
</dbReference>
<dbReference type="InterPro" id="IPR009720">
    <property type="entry name" value="IMP_biosynth_PurP_C"/>
</dbReference>
<dbReference type="InterPro" id="IPR010672">
    <property type="entry name" value="IMP_biosynth_PurP_N"/>
</dbReference>
<dbReference type="InterPro" id="IPR016185">
    <property type="entry name" value="PreATP-grasp_dom_sf"/>
</dbReference>
<dbReference type="PANTHER" id="PTHR38147:SF2">
    <property type="entry name" value="5-FORMAMINOIMIDAZOLE-4-CARBOXAMIDE-1-(BETA)-D-RIBOFURANOSYL 5'-MONOPHOSPHATE SYNTHETASE"/>
    <property type="match status" value="1"/>
</dbReference>
<dbReference type="PANTHER" id="PTHR38147">
    <property type="entry name" value="5-FORMAMINOIMIDAZOLE-4-CARBOXAMIDE-1-(BETA)-D-RIBOFURANOSYL 5'-MONOPHOSPHATE SYNTHETASE-RELATED"/>
    <property type="match status" value="1"/>
</dbReference>
<dbReference type="Pfam" id="PF06849">
    <property type="entry name" value="DUF1246"/>
    <property type="match status" value="1"/>
</dbReference>
<dbReference type="Pfam" id="PF06973">
    <property type="entry name" value="DUF1297"/>
    <property type="match status" value="1"/>
</dbReference>
<dbReference type="PIRSF" id="PIRSF004602">
    <property type="entry name" value="ATPgrasp_PurP"/>
    <property type="match status" value="1"/>
</dbReference>
<dbReference type="SUPFAM" id="SSF56059">
    <property type="entry name" value="Glutathione synthetase ATP-binding domain-like"/>
    <property type="match status" value="1"/>
</dbReference>
<dbReference type="SUPFAM" id="SSF52440">
    <property type="entry name" value="PreATP-grasp domain"/>
    <property type="match status" value="1"/>
</dbReference>
<dbReference type="PROSITE" id="PS50975">
    <property type="entry name" value="ATP_GRASP"/>
    <property type="match status" value="1"/>
</dbReference>
<reference key="1">
    <citation type="journal article" date="2002" name="Proc. Natl. Acad. Sci. U.S.A.">
        <title>Genome sequence of the hyperthermophilic crenarchaeon Pyrobaculum aerophilum.</title>
        <authorList>
            <person name="Fitz-Gibbon S.T."/>
            <person name="Ladner H."/>
            <person name="Kim U.-J."/>
            <person name="Stetter K.O."/>
            <person name="Simon M.I."/>
            <person name="Miller J.H."/>
        </authorList>
    </citation>
    <scope>NUCLEOTIDE SEQUENCE [LARGE SCALE GENOMIC DNA]</scope>
    <source>
        <strain>ATCC 51768 / DSM 7523 / JCM 9630 / CIP 104966 / NBRC 100827 / IM2</strain>
    </source>
</reference>
<name>PURP_PYRAE</name>
<proteinExistence type="inferred from homology"/>
<keyword id="KW-0067">ATP-binding</keyword>
<keyword id="KW-0436">Ligase</keyword>
<keyword id="KW-0460">Magnesium</keyword>
<keyword id="KW-0464">Manganese</keyword>
<keyword id="KW-0479">Metal-binding</keyword>
<keyword id="KW-0547">Nucleotide-binding</keyword>
<keyword id="KW-0658">Purine biosynthesis</keyword>
<keyword id="KW-1185">Reference proteome</keyword>